<accession>A5UBX3</accession>
<dbReference type="EC" id="1.6.5.-" evidence="1"/>
<dbReference type="EC" id="1.7.1.17" evidence="1"/>
<dbReference type="EMBL" id="CP000671">
    <property type="protein sequence ID" value="ABQ98274.1"/>
    <property type="molecule type" value="Genomic_DNA"/>
</dbReference>
<dbReference type="SMR" id="A5UBX3"/>
<dbReference type="KEGG" id="hip:CGSHiEE_04365"/>
<dbReference type="HOGENOM" id="CLU_088964_0_0_6"/>
<dbReference type="GO" id="GO:0009055">
    <property type="term" value="F:electron transfer activity"/>
    <property type="evidence" value="ECO:0007669"/>
    <property type="project" value="UniProtKB-UniRule"/>
</dbReference>
<dbReference type="GO" id="GO:0010181">
    <property type="term" value="F:FMN binding"/>
    <property type="evidence" value="ECO:0007669"/>
    <property type="project" value="UniProtKB-UniRule"/>
</dbReference>
<dbReference type="GO" id="GO:0016652">
    <property type="term" value="F:oxidoreductase activity, acting on NAD(P)H as acceptor"/>
    <property type="evidence" value="ECO:0007669"/>
    <property type="project" value="UniProtKB-UniRule"/>
</dbReference>
<dbReference type="GO" id="GO:0016655">
    <property type="term" value="F:oxidoreductase activity, acting on NAD(P)H, quinone or similar compound as acceptor"/>
    <property type="evidence" value="ECO:0007669"/>
    <property type="project" value="InterPro"/>
</dbReference>
<dbReference type="Gene3D" id="3.40.50.360">
    <property type="match status" value="1"/>
</dbReference>
<dbReference type="HAMAP" id="MF_01216">
    <property type="entry name" value="Azoreductase_type1"/>
    <property type="match status" value="1"/>
</dbReference>
<dbReference type="InterPro" id="IPR003680">
    <property type="entry name" value="Flavodoxin_fold"/>
</dbReference>
<dbReference type="InterPro" id="IPR029039">
    <property type="entry name" value="Flavoprotein-like_sf"/>
</dbReference>
<dbReference type="InterPro" id="IPR050104">
    <property type="entry name" value="FMN-dep_NADH:Q_OxRdtase_AzoR1"/>
</dbReference>
<dbReference type="InterPro" id="IPR023048">
    <property type="entry name" value="NADH:quinone_OxRdtase_FMN_depd"/>
</dbReference>
<dbReference type="PANTHER" id="PTHR43741">
    <property type="entry name" value="FMN-DEPENDENT NADH-AZOREDUCTASE 1"/>
    <property type="match status" value="1"/>
</dbReference>
<dbReference type="PANTHER" id="PTHR43741:SF2">
    <property type="entry name" value="FMN-DEPENDENT NADH:QUINONE OXIDOREDUCTASE"/>
    <property type="match status" value="1"/>
</dbReference>
<dbReference type="Pfam" id="PF02525">
    <property type="entry name" value="Flavodoxin_2"/>
    <property type="match status" value="1"/>
</dbReference>
<dbReference type="SUPFAM" id="SSF52218">
    <property type="entry name" value="Flavoproteins"/>
    <property type="match status" value="1"/>
</dbReference>
<protein>
    <recommendedName>
        <fullName evidence="1">FMN-dependent NADH:quinone oxidoreductase</fullName>
        <ecNumber evidence="1">1.6.5.-</ecNumber>
    </recommendedName>
    <alternativeName>
        <fullName evidence="1">Azo-dye reductase</fullName>
    </alternativeName>
    <alternativeName>
        <fullName evidence="1">FMN-dependent NADH-azo compound oxidoreductase</fullName>
    </alternativeName>
    <alternativeName>
        <fullName evidence="1">FMN-dependent NADH-azoreductase</fullName>
        <ecNumber evidence="1">1.7.1.17</ecNumber>
    </alternativeName>
</protein>
<evidence type="ECO:0000255" key="1">
    <source>
        <dbReference type="HAMAP-Rule" id="MF_01216"/>
    </source>
</evidence>
<sequence length="194" mass="21312">MNNVLVLKSSISGNNSQTNQLADYVIEKLQGNHIVVRDLAQQPLPYFDTVAAIAVRGEPKTTEEKQLLALSDELIEELKNAQTLIIGAPMYNLNIPTQLKSYFDFIARPRVTFQYTAKGPEGLLKGKKAIVLCAFGGLYDEENLVTQYMKSILGFIGITDVQFVYAQGIGLGAEAIEKAQSSAKNKINELITSL</sequence>
<gene>
    <name evidence="1" type="primary">azoR</name>
    <name type="ordered locus">CGSHiEE_04365</name>
</gene>
<reference key="1">
    <citation type="journal article" date="2007" name="Genome Biol.">
        <title>Characterization and modeling of the Haemophilus influenzae core and supragenomes based on the complete genomic sequences of Rd and 12 clinical nontypeable strains.</title>
        <authorList>
            <person name="Hogg J.S."/>
            <person name="Hu F.Z."/>
            <person name="Janto B."/>
            <person name="Boissy R."/>
            <person name="Hayes J."/>
            <person name="Keefe R."/>
            <person name="Post J.C."/>
            <person name="Ehrlich G.D."/>
        </authorList>
    </citation>
    <scope>NUCLEOTIDE SEQUENCE [LARGE SCALE GENOMIC DNA]</scope>
    <source>
        <strain>PittEE</strain>
    </source>
</reference>
<feature type="chain" id="PRO_1000066511" description="FMN-dependent NADH:quinone oxidoreductase">
    <location>
        <begin position="1"/>
        <end position="194"/>
    </location>
</feature>
<feature type="binding site" evidence="1">
    <location>
        <position position="10"/>
    </location>
    <ligand>
        <name>FMN</name>
        <dbReference type="ChEBI" id="CHEBI:58210"/>
    </ligand>
</feature>
<feature type="binding site" evidence="1">
    <location>
        <begin position="90"/>
        <end position="93"/>
    </location>
    <ligand>
        <name>FMN</name>
        <dbReference type="ChEBI" id="CHEBI:58210"/>
    </ligand>
</feature>
<name>AZOR_HAEIE</name>
<comment type="function">
    <text evidence="1">Quinone reductase that provides resistance to thiol-specific stress caused by electrophilic quinones.</text>
</comment>
<comment type="function">
    <text evidence="1">Also exhibits azoreductase activity. Catalyzes the reductive cleavage of the azo bond in aromatic azo compounds to the corresponding amines.</text>
</comment>
<comment type="catalytic activity">
    <reaction evidence="1">
        <text>2 a quinone + NADH + H(+) = 2 a 1,4-benzosemiquinone + NAD(+)</text>
        <dbReference type="Rhea" id="RHEA:65952"/>
        <dbReference type="ChEBI" id="CHEBI:15378"/>
        <dbReference type="ChEBI" id="CHEBI:57540"/>
        <dbReference type="ChEBI" id="CHEBI:57945"/>
        <dbReference type="ChEBI" id="CHEBI:132124"/>
        <dbReference type="ChEBI" id="CHEBI:134225"/>
    </reaction>
</comment>
<comment type="catalytic activity">
    <reaction evidence="1">
        <text>N,N-dimethyl-1,4-phenylenediamine + anthranilate + 2 NAD(+) = 2-(4-dimethylaminophenyl)diazenylbenzoate + 2 NADH + 2 H(+)</text>
        <dbReference type="Rhea" id="RHEA:55872"/>
        <dbReference type="ChEBI" id="CHEBI:15378"/>
        <dbReference type="ChEBI" id="CHEBI:15783"/>
        <dbReference type="ChEBI" id="CHEBI:16567"/>
        <dbReference type="ChEBI" id="CHEBI:57540"/>
        <dbReference type="ChEBI" id="CHEBI:57945"/>
        <dbReference type="ChEBI" id="CHEBI:71579"/>
        <dbReference type="EC" id="1.7.1.17"/>
    </reaction>
</comment>
<comment type="cofactor">
    <cofactor evidence="1">
        <name>FMN</name>
        <dbReference type="ChEBI" id="CHEBI:58210"/>
    </cofactor>
    <text evidence="1">Binds 1 FMN per subunit.</text>
</comment>
<comment type="subunit">
    <text evidence="1">Homodimer.</text>
</comment>
<comment type="similarity">
    <text evidence="1">Belongs to the azoreductase type 1 family.</text>
</comment>
<keyword id="KW-0285">Flavoprotein</keyword>
<keyword id="KW-0288">FMN</keyword>
<keyword id="KW-0520">NAD</keyword>
<keyword id="KW-0560">Oxidoreductase</keyword>
<proteinExistence type="inferred from homology"/>
<organism>
    <name type="scientific">Haemophilus influenzae (strain PittEE)</name>
    <dbReference type="NCBI Taxonomy" id="374930"/>
    <lineage>
        <taxon>Bacteria</taxon>
        <taxon>Pseudomonadati</taxon>
        <taxon>Pseudomonadota</taxon>
        <taxon>Gammaproteobacteria</taxon>
        <taxon>Pasteurellales</taxon>
        <taxon>Pasteurellaceae</taxon>
        <taxon>Haemophilus</taxon>
    </lineage>
</organism>